<keyword id="KW-1015">Disulfide bond</keyword>
<keyword id="KW-0325">Glycoprotein</keyword>
<keyword id="KW-0372">Hormone</keyword>
<keyword id="KW-0964">Secreted</keyword>
<keyword id="KW-0732">Signal</keyword>
<gene>
    <name type="primary">cgbb</name>
</gene>
<protein>
    <recommendedName>
        <fullName>Gonadotropin subunit beta-2</fullName>
    </recommendedName>
    <alternativeName>
        <fullName>GTH-II-beta</fullName>
    </alternativeName>
    <alternativeName>
        <fullName>Gonadotropin beta-II chain</fullName>
    </alternativeName>
    <alternativeName>
        <fullName>Luteinizing hormone-like GTH</fullName>
    </alternativeName>
</protein>
<reference key="1">
    <citation type="submission" date="1991-07" db="EMBL/GenBank/DDBJ databases">
        <title>The cDNA cloning and primary structures of grass carp gonadotropin subunits.</title>
        <authorList>
            <person name="Chang Y.S."/>
            <person name="Huang F.-L."/>
            <person name="Lo T.-B."/>
        </authorList>
    </citation>
    <scope>NUCLEOTIDE SEQUENCE [MRNA]</scope>
    <source>
        <tissue>Pituitary</tissue>
    </source>
</reference>
<name>GTHB2_CTEID</name>
<dbReference type="EMBL" id="X61051">
    <property type="protein sequence ID" value="CAA43385.1"/>
    <property type="molecule type" value="mRNA"/>
</dbReference>
<dbReference type="PIR" id="S16763">
    <property type="entry name" value="S16763"/>
</dbReference>
<dbReference type="SMR" id="P30984"/>
<dbReference type="GlyCosmos" id="P30984">
    <property type="glycosylation" value="1 site, No reported glycans"/>
</dbReference>
<dbReference type="GO" id="GO:0005737">
    <property type="term" value="C:cytoplasm"/>
    <property type="evidence" value="ECO:0007669"/>
    <property type="project" value="TreeGrafter"/>
</dbReference>
<dbReference type="GO" id="GO:0005615">
    <property type="term" value="C:extracellular space"/>
    <property type="evidence" value="ECO:0007669"/>
    <property type="project" value="TreeGrafter"/>
</dbReference>
<dbReference type="GO" id="GO:0031762">
    <property type="term" value="F:follicle-stimulating hormone receptor binding"/>
    <property type="evidence" value="ECO:0000250"/>
    <property type="project" value="UniProtKB"/>
</dbReference>
<dbReference type="GO" id="GO:0005179">
    <property type="term" value="F:hormone activity"/>
    <property type="evidence" value="ECO:0007669"/>
    <property type="project" value="UniProtKB-KW"/>
</dbReference>
<dbReference type="GO" id="GO:0031775">
    <property type="term" value="F:lutropin-choriogonadotropic hormone receptor binding"/>
    <property type="evidence" value="ECO:0000250"/>
    <property type="project" value="UniProtKB"/>
</dbReference>
<dbReference type="GO" id="GO:0046982">
    <property type="term" value="F:protein heterodimerization activity"/>
    <property type="evidence" value="ECO:0000250"/>
    <property type="project" value="UniProtKB"/>
</dbReference>
<dbReference type="GO" id="GO:0007186">
    <property type="term" value="P:G protein-coupled receptor signaling pathway"/>
    <property type="evidence" value="ECO:0007669"/>
    <property type="project" value="TreeGrafter"/>
</dbReference>
<dbReference type="GO" id="GO:2000836">
    <property type="term" value="P:positive regulation of androgen secretion"/>
    <property type="evidence" value="ECO:0000250"/>
    <property type="project" value="UniProtKB"/>
</dbReference>
<dbReference type="GO" id="GO:2000866">
    <property type="term" value="P:positive regulation of estradiol secretion"/>
    <property type="evidence" value="ECO:0000250"/>
    <property type="project" value="UniProtKB"/>
</dbReference>
<dbReference type="GO" id="GO:0010628">
    <property type="term" value="P:positive regulation of gene expression"/>
    <property type="evidence" value="ECO:0000250"/>
    <property type="project" value="UniProtKB"/>
</dbReference>
<dbReference type="CDD" id="cd00069">
    <property type="entry name" value="GHB_like"/>
    <property type="match status" value="1"/>
</dbReference>
<dbReference type="FunFam" id="2.10.90.10:FF:000007">
    <property type="entry name" value="Luteinizing hormone beta subunit"/>
    <property type="match status" value="1"/>
</dbReference>
<dbReference type="Gene3D" id="2.10.90.10">
    <property type="entry name" value="Cystine-knot cytokines"/>
    <property type="match status" value="1"/>
</dbReference>
<dbReference type="InterPro" id="IPR029034">
    <property type="entry name" value="Cystine-knot_cytokine"/>
</dbReference>
<dbReference type="InterPro" id="IPR006208">
    <property type="entry name" value="Glyco_hormone_CN"/>
</dbReference>
<dbReference type="InterPro" id="IPR001545">
    <property type="entry name" value="Gonadotropin_bsu"/>
</dbReference>
<dbReference type="InterPro" id="IPR018245">
    <property type="entry name" value="Gonadotropin_bsu_CS"/>
</dbReference>
<dbReference type="PANTHER" id="PTHR11515">
    <property type="entry name" value="GLYCOPROTEIN HORMONE BETA CHAIN"/>
    <property type="match status" value="1"/>
</dbReference>
<dbReference type="PANTHER" id="PTHR11515:SF11">
    <property type="entry name" value="LUTROPIN SUBUNIT BETA"/>
    <property type="match status" value="1"/>
</dbReference>
<dbReference type="Pfam" id="PF00007">
    <property type="entry name" value="Cys_knot"/>
    <property type="match status" value="1"/>
</dbReference>
<dbReference type="SMART" id="SM00068">
    <property type="entry name" value="GHB"/>
    <property type="match status" value="1"/>
</dbReference>
<dbReference type="SUPFAM" id="SSF57501">
    <property type="entry name" value="Cystine-knot cytokines"/>
    <property type="match status" value="1"/>
</dbReference>
<dbReference type="PROSITE" id="PS00261">
    <property type="entry name" value="GLYCO_HORMONE_BETA_1"/>
    <property type="match status" value="1"/>
</dbReference>
<dbReference type="PROSITE" id="PS00689">
    <property type="entry name" value="GLYCO_HORMONE_BETA_2"/>
    <property type="match status" value="1"/>
</dbReference>
<comment type="function">
    <text>Involved in gametogenesis and steroidogenesis.</text>
</comment>
<comment type="subunit">
    <text>Heterodimer of an alpha and a beta chain.</text>
</comment>
<comment type="subcellular location">
    <subcellularLocation>
        <location>Secreted</location>
    </subcellularLocation>
</comment>
<comment type="similarity">
    <text evidence="3">Belongs to the glycoprotein hormones subunit beta family.</text>
</comment>
<proteinExistence type="evidence at transcript level"/>
<feature type="signal peptide" evidence="1">
    <location>
        <begin position="1" status="less than"/>
        <end position="28"/>
    </location>
</feature>
<feature type="chain" id="PRO_0000011687" description="Gonadotropin subunit beta-2">
    <location>
        <begin position="29"/>
        <end position="146"/>
    </location>
</feature>
<feature type="glycosylation site" description="N-linked (GlcNAc...) asparagine" evidence="2">
    <location>
        <position position="39"/>
    </location>
</feature>
<feature type="disulfide bond" evidence="1">
    <location>
        <begin position="35"/>
        <end position="83"/>
    </location>
</feature>
<feature type="disulfide bond" evidence="1">
    <location>
        <begin position="49"/>
        <end position="98"/>
    </location>
</feature>
<feature type="disulfide bond" evidence="1">
    <location>
        <begin position="52"/>
        <end position="136"/>
    </location>
</feature>
<feature type="disulfide bond" evidence="1">
    <location>
        <begin position="60"/>
        <end position="114"/>
    </location>
</feature>
<feature type="disulfide bond" evidence="1">
    <location>
        <begin position="64"/>
        <end position="116"/>
    </location>
</feature>
<feature type="disulfide bond" evidence="1">
    <location>
        <begin position="119"/>
        <end position="126"/>
    </location>
</feature>
<feature type="non-terminal residue">
    <location>
        <position position="1"/>
    </location>
</feature>
<evidence type="ECO:0000250" key="1"/>
<evidence type="ECO:0000255" key="2"/>
<evidence type="ECO:0000305" key="3"/>
<sequence length="146" mass="16320">TGTPVKILVVRNILLLLFCLVVLLVFAQSSFLPPCEPVNETVAVEKEGCPKCLVFQTTICSGHCLTKEPVYKSPFSTVYQHVCTYRDVRYETVRLPDCPPGVDPHITYPVALSCDCSLCTMDTSDCTIESLQPDFCMSQREDFPVY</sequence>
<organism>
    <name type="scientific">Ctenopharyngodon idella</name>
    <name type="common">Grass carp</name>
    <name type="synonym">Leuciscus idella</name>
    <dbReference type="NCBI Taxonomy" id="7959"/>
    <lineage>
        <taxon>Eukaryota</taxon>
        <taxon>Metazoa</taxon>
        <taxon>Chordata</taxon>
        <taxon>Craniata</taxon>
        <taxon>Vertebrata</taxon>
        <taxon>Euteleostomi</taxon>
        <taxon>Actinopterygii</taxon>
        <taxon>Neopterygii</taxon>
        <taxon>Teleostei</taxon>
        <taxon>Ostariophysi</taxon>
        <taxon>Cypriniformes</taxon>
        <taxon>Xenocyprididae</taxon>
        <taxon>Xenocypridinae</taxon>
        <taxon>Ctenopharyngodon</taxon>
    </lineage>
</organism>
<accession>P30984</accession>